<dbReference type="EC" id="2.8.1.7" evidence="6 7 13"/>
<dbReference type="EMBL" id="AF097025">
    <property type="protein sequence ID" value="AAD09187.2"/>
    <property type="molecule type" value="mRNA"/>
</dbReference>
<dbReference type="EMBL" id="AK001470">
    <property type="protein sequence ID" value="BAG50917.1"/>
    <property type="molecule type" value="mRNA"/>
</dbReference>
<dbReference type="EMBL" id="AK302023">
    <property type="protein sequence ID" value="BAG63421.1"/>
    <property type="molecule type" value="mRNA"/>
</dbReference>
<dbReference type="EMBL" id="AL109827">
    <property type="status" value="NOT_ANNOTATED_CDS"/>
    <property type="molecule type" value="Genomic_DNA"/>
</dbReference>
<dbReference type="EMBL" id="AL357374">
    <property type="status" value="NOT_ANNOTATED_CDS"/>
    <property type="molecule type" value="Genomic_DNA"/>
</dbReference>
<dbReference type="EMBL" id="CH471077">
    <property type="protein sequence ID" value="EAW76170.1"/>
    <property type="molecule type" value="Genomic_DNA"/>
</dbReference>
<dbReference type="EMBL" id="CH471077">
    <property type="protein sequence ID" value="EAW76172.1"/>
    <property type="molecule type" value="Genomic_DNA"/>
</dbReference>
<dbReference type="EMBL" id="BC065560">
    <property type="protein sequence ID" value="AAH65560.1"/>
    <property type="molecule type" value="mRNA"/>
</dbReference>
<dbReference type="EMBL" id="AJ010952">
    <property type="protein sequence ID" value="CAA09424.1"/>
    <property type="molecule type" value="mRNA"/>
</dbReference>
<dbReference type="CCDS" id="CCDS13262.1">
    <molecule id="Q9Y697-1"/>
</dbReference>
<dbReference type="CCDS" id="CCDS56185.1">
    <molecule id="Q9Y697-3"/>
</dbReference>
<dbReference type="RefSeq" id="NP_001185918.1">
    <molecule id="Q9Y697-3"/>
    <property type="nucleotide sequence ID" value="NM_001198989.2"/>
</dbReference>
<dbReference type="RefSeq" id="NP_066923.3">
    <molecule id="Q9Y697-1"/>
    <property type="nucleotide sequence ID" value="NM_021100.4"/>
</dbReference>
<dbReference type="PDB" id="5KZ5">
    <property type="method" value="EM"/>
    <property type="resolution" value="14.30 A"/>
    <property type="chains" value="1/2/3/4/M/N/O/P/Q/R/S/T=67-457"/>
</dbReference>
<dbReference type="PDB" id="5USR">
    <property type="method" value="X-ray"/>
    <property type="resolution" value="3.09 A"/>
    <property type="chains" value="A/C/E/G=56-457"/>
</dbReference>
<dbReference type="PDB" id="5WGB">
    <property type="method" value="X-ray"/>
    <property type="resolution" value="2.75 A"/>
    <property type="chains" value="A=56-457"/>
</dbReference>
<dbReference type="PDB" id="5WKP">
    <property type="method" value="X-ray"/>
    <property type="resolution" value="3.15 A"/>
    <property type="chains" value="A/E=56-457"/>
</dbReference>
<dbReference type="PDB" id="5WLW">
    <property type="method" value="X-ray"/>
    <property type="resolution" value="3.32 A"/>
    <property type="chains" value="A/E=56-457"/>
</dbReference>
<dbReference type="PDB" id="6NZU">
    <property type="method" value="EM"/>
    <property type="resolution" value="3.20 A"/>
    <property type="chains" value="A/E=55-457"/>
</dbReference>
<dbReference type="PDB" id="6UXE">
    <property type="method" value="X-ray"/>
    <property type="resolution" value="1.57 A"/>
    <property type="chains" value="A=56-457"/>
</dbReference>
<dbReference type="PDB" id="6W1D">
    <property type="method" value="X-ray"/>
    <property type="resolution" value="1.79 A"/>
    <property type="chains" value="A=56-457"/>
</dbReference>
<dbReference type="PDB" id="6WI2">
    <property type="method" value="X-ray"/>
    <property type="resolution" value="1.95 A"/>
    <property type="chains" value="A=56-457"/>
</dbReference>
<dbReference type="PDB" id="6WIH">
    <property type="method" value="X-ray"/>
    <property type="resolution" value="1.90 A"/>
    <property type="chains" value="A=56-457"/>
</dbReference>
<dbReference type="PDB" id="7RTK">
    <property type="method" value="X-ray"/>
    <property type="resolution" value="2.50 A"/>
    <property type="chains" value="A=56-457"/>
</dbReference>
<dbReference type="PDB" id="8PK8">
    <property type="method" value="EM"/>
    <property type="resolution" value="2.49 A"/>
    <property type="chains" value="A=56-457"/>
</dbReference>
<dbReference type="PDB" id="8PK9">
    <property type="method" value="EM"/>
    <property type="resolution" value="2.58 A"/>
    <property type="chains" value="A=56-457"/>
</dbReference>
<dbReference type="PDB" id="8PKA">
    <property type="method" value="EM"/>
    <property type="resolution" value="2.75 A"/>
    <property type="chains" value="A=56-457"/>
</dbReference>
<dbReference type="PDB" id="8RMC">
    <property type="method" value="EM"/>
    <property type="resolution" value="2.26 A"/>
    <property type="chains" value="A/E=56-457"/>
</dbReference>
<dbReference type="PDB" id="8RMD">
    <property type="method" value="EM"/>
    <property type="resolution" value="2.52 A"/>
    <property type="chains" value="A/E=56-457"/>
</dbReference>
<dbReference type="PDB" id="8RME">
    <property type="method" value="EM"/>
    <property type="resolution" value="2.49 A"/>
    <property type="chains" value="A/E=56-457"/>
</dbReference>
<dbReference type="PDB" id="8RMF">
    <property type="method" value="EM"/>
    <property type="resolution" value="2.33 A"/>
    <property type="chains" value="A/E=56-457"/>
</dbReference>
<dbReference type="PDB" id="8RMG">
    <property type="method" value="EM"/>
    <property type="resolution" value="2.46 A"/>
    <property type="chains" value="A/E=56-457"/>
</dbReference>
<dbReference type="PDB" id="8TVT">
    <property type="method" value="X-ray"/>
    <property type="resolution" value="2.00 A"/>
    <property type="chains" value="A=56-454"/>
</dbReference>
<dbReference type="PDBsum" id="5KZ5"/>
<dbReference type="PDBsum" id="5USR"/>
<dbReference type="PDBsum" id="5WGB"/>
<dbReference type="PDBsum" id="5WKP"/>
<dbReference type="PDBsum" id="5WLW"/>
<dbReference type="PDBsum" id="6NZU"/>
<dbReference type="PDBsum" id="6UXE"/>
<dbReference type="PDBsum" id="6W1D"/>
<dbReference type="PDBsum" id="6WI2"/>
<dbReference type="PDBsum" id="6WIH"/>
<dbReference type="PDBsum" id="7RTK"/>
<dbReference type="PDBsum" id="8PK8"/>
<dbReference type="PDBsum" id="8PK9"/>
<dbReference type="PDBsum" id="8PKA"/>
<dbReference type="PDBsum" id="8RMC"/>
<dbReference type="PDBsum" id="8RMD"/>
<dbReference type="PDBsum" id="8RME"/>
<dbReference type="PDBsum" id="8RMF"/>
<dbReference type="PDBsum" id="8RMG"/>
<dbReference type="PDBsum" id="8TVT"/>
<dbReference type="EMDB" id="EMD-0560"/>
<dbReference type="EMDB" id="EMD-17732"/>
<dbReference type="EMDB" id="EMD-17733"/>
<dbReference type="EMDB" id="EMD-17734"/>
<dbReference type="EMDB" id="EMD-19356"/>
<dbReference type="EMDB" id="EMD-19357"/>
<dbReference type="EMDB" id="EMD-19359"/>
<dbReference type="EMDB" id="EMD-19360"/>
<dbReference type="EMDB" id="EMD-19361"/>
<dbReference type="EMDB" id="EMD-8301"/>
<dbReference type="SASBDB" id="Q9Y697"/>
<dbReference type="SMR" id="Q9Y697"/>
<dbReference type="BioGRID" id="114516">
    <property type="interactions" value="153"/>
</dbReference>
<dbReference type="ComplexPortal" id="CPX-5641">
    <property type="entry name" value="Mitochondrial NIAUFX iron-sulfur cluster assembly complex"/>
</dbReference>
<dbReference type="CORUM" id="Q9Y697"/>
<dbReference type="FunCoup" id="Q9Y697">
    <property type="interactions" value="3144"/>
</dbReference>
<dbReference type="IntAct" id="Q9Y697">
    <property type="interactions" value="62"/>
</dbReference>
<dbReference type="MINT" id="Q9Y697"/>
<dbReference type="STRING" id="9606.ENSP00000363205"/>
<dbReference type="DrugBank" id="DB00160">
    <property type="generic name" value="Alanine"/>
</dbReference>
<dbReference type="DrugBank" id="DB00151">
    <property type="generic name" value="Cysteine"/>
</dbReference>
<dbReference type="DrugBank" id="DB00114">
    <property type="generic name" value="Pyridoxal phosphate"/>
</dbReference>
<dbReference type="GlyGen" id="Q9Y697">
    <property type="glycosylation" value="2 sites, 1 O-linked glycan (1 site)"/>
</dbReference>
<dbReference type="iPTMnet" id="Q9Y697"/>
<dbReference type="PhosphoSitePlus" id="Q9Y697"/>
<dbReference type="SwissPalm" id="Q9Y697"/>
<dbReference type="BioMuta" id="NFS1"/>
<dbReference type="DMDM" id="62512153"/>
<dbReference type="jPOST" id="Q9Y697"/>
<dbReference type="MassIVE" id="Q9Y697"/>
<dbReference type="PaxDb" id="9606-ENSP00000363205"/>
<dbReference type="PeptideAtlas" id="Q9Y697"/>
<dbReference type="ProteomicsDB" id="24766"/>
<dbReference type="ProteomicsDB" id="86633">
    <molecule id="Q9Y697-1"/>
</dbReference>
<dbReference type="ProteomicsDB" id="86634">
    <molecule id="Q9Y697-2"/>
</dbReference>
<dbReference type="Pumba" id="Q9Y697"/>
<dbReference type="Antibodypedia" id="35035">
    <property type="antibodies" value="234 antibodies from 26 providers"/>
</dbReference>
<dbReference type="DNASU" id="9054"/>
<dbReference type="Ensembl" id="ENST00000374085.5">
    <molecule id="Q9Y697-2"/>
    <property type="protein sequence ID" value="ENSP00000363198.1"/>
    <property type="gene ID" value="ENSG00000244005.13"/>
</dbReference>
<dbReference type="Ensembl" id="ENST00000374092.9">
    <molecule id="Q9Y697-1"/>
    <property type="protein sequence ID" value="ENSP00000363205.3"/>
    <property type="gene ID" value="ENSG00000244005.13"/>
</dbReference>
<dbReference type="Ensembl" id="ENST00000397425.5">
    <molecule id="Q9Y697-2"/>
    <property type="protein sequence ID" value="ENSP00000380570.1"/>
    <property type="gene ID" value="ENSG00000244005.13"/>
</dbReference>
<dbReference type="Ensembl" id="ENST00000541387.5">
    <molecule id="Q9Y697-3"/>
    <property type="protein sequence ID" value="ENSP00000440897.1"/>
    <property type="gene ID" value="ENSG00000244005.13"/>
</dbReference>
<dbReference type="GeneID" id="9054"/>
<dbReference type="KEGG" id="hsa:9054"/>
<dbReference type="MANE-Select" id="ENST00000374092.9">
    <property type="protein sequence ID" value="ENSP00000363205.3"/>
    <property type="RefSeq nucleotide sequence ID" value="NM_021100.5"/>
    <property type="RefSeq protein sequence ID" value="NP_066923.3"/>
</dbReference>
<dbReference type="UCSC" id="uc002xdt.3">
    <molecule id="Q9Y697-1"/>
    <property type="organism name" value="human"/>
</dbReference>
<dbReference type="AGR" id="HGNC:15910"/>
<dbReference type="CTD" id="9054"/>
<dbReference type="DisGeNET" id="9054"/>
<dbReference type="GeneCards" id="NFS1"/>
<dbReference type="HGNC" id="HGNC:15910">
    <property type="gene designation" value="NFS1"/>
</dbReference>
<dbReference type="HPA" id="ENSG00000244005">
    <property type="expression patterns" value="Low tissue specificity"/>
</dbReference>
<dbReference type="MalaCards" id="NFS1"/>
<dbReference type="MIM" id="603485">
    <property type="type" value="gene"/>
</dbReference>
<dbReference type="MIM" id="619386">
    <property type="type" value="phenotype"/>
</dbReference>
<dbReference type="neXtProt" id="NX_Q9Y697"/>
<dbReference type="OpenTargets" id="ENSG00000244005"/>
<dbReference type="Orphanet" id="397593">
    <property type="disease" value="Severe neonatal lactic acidosis due to NFS1-ISD11 complex deficiency"/>
</dbReference>
<dbReference type="PharmGKB" id="PA31607"/>
<dbReference type="VEuPathDB" id="HostDB:ENSG00000244005"/>
<dbReference type="eggNOG" id="KOG1549">
    <property type="taxonomic scope" value="Eukaryota"/>
</dbReference>
<dbReference type="GeneTree" id="ENSGT00940000155740"/>
<dbReference type="HOGENOM" id="CLU_003433_0_2_1"/>
<dbReference type="InParanoid" id="Q9Y697"/>
<dbReference type="OMA" id="KGLYWAR"/>
<dbReference type="OrthoDB" id="10250117at2759"/>
<dbReference type="PAN-GO" id="Q9Y697">
    <property type="GO annotations" value="5 GO annotations based on evolutionary models"/>
</dbReference>
<dbReference type="PhylomeDB" id="Q9Y697"/>
<dbReference type="TreeFam" id="TF105658"/>
<dbReference type="BioCyc" id="MetaCyc:HS01304-MONOMER"/>
<dbReference type="BRENDA" id="2.8.1.7">
    <property type="organism ID" value="2681"/>
</dbReference>
<dbReference type="PathwayCommons" id="Q9Y697"/>
<dbReference type="Reactome" id="R-HSA-1362409">
    <molecule id="Q9Y697-1"/>
    <property type="pathway name" value="Mitochondrial iron-sulfur cluster biogenesis"/>
</dbReference>
<dbReference type="Reactome" id="R-HSA-947581">
    <molecule id="Q9Y697-2"/>
    <property type="pathway name" value="Molybdenum cofactor biosynthesis"/>
</dbReference>
<dbReference type="Reactome" id="R-HSA-9854311">
    <molecule id="Q9Y697-1"/>
    <property type="pathway name" value="Maturation of TCA enzymes and regulation of TCA cycle"/>
</dbReference>
<dbReference type="Reactome" id="R-HSA-9865881">
    <molecule id="Q9Y697-1"/>
    <property type="pathway name" value="Complex III assembly"/>
</dbReference>
<dbReference type="SignaLink" id="Q9Y697"/>
<dbReference type="SIGNOR" id="Q9Y697"/>
<dbReference type="BioGRID-ORCS" id="9054">
    <property type="hits" value="699 hits in 1138 CRISPR screens"/>
</dbReference>
<dbReference type="ChiTaRS" id="NFS1">
    <property type="organism name" value="human"/>
</dbReference>
<dbReference type="GeneWiki" id="NFS1"/>
<dbReference type="GenomeRNAi" id="9054"/>
<dbReference type="Pharos" id="Q9Y697">
    <property type="development level" value="Tbio"/>
</dbReference>
<dbReference type="PRO" id="PR:Q9Y697"/>
<dbReference type="Proteomes" id="UP000005640">
    <property type="component" value="Chromosome 20"/>
</dbReference>
<dbReference type="RNAct" id="Q9Y697">
    <property type="molecule type" value="protein"/>
</dbReference>
<dbReference type="Bgee" id="ENSG00000244005">
    <property type="expression patterns" value="Expressed in right adrenal gland cortex and 180 other cell types or tissues"/>
</dbReference>
<dbReference type="ExpressionAtlas" id="Q9Y697">
    <property type="expression patterns" value="baseline and differential"/>
</dbReference>
<dbReference type="GO" id="GO:0005813">
    <property type="term" value="C:centrosome"/>
    <property type="evidence" value="ECO:0000314"/>
    <property type="project" value="UniProtKB"/>
</dbReference>
<dbReference type="GO" id="GO:0005737">
    <property type="term" value="C:cytoplasm"/>
    <property type="evidence" value="ECO:0000314"/>
    <property type="project" value="UniProtKB"/>
</dbReference>
<dbReference type="GO" id="GO:0005829">
    <property type="term" value="C:cytosol"/>
    <property type="evidence" value="ECO:0000314"/>
    <property type="project" value="HPA"/>
</dbReference>
<dbReference type="GO" id="GO:1990229">
    <property type="term" value="C:iron-sulfur cluster assembly complex"/>
    <property type="evidence" value="ECO:0000303"/>
    <property type="project" value="ComplexPortal"/>
</dbReference>
<dbReference type="GO" id="GO:0099128">
    <property type="term" value="C:mitochondrial [2Fe-2S] assembly complex"/>
    <property type="evidence" value="ECO:0000314"/>
    <property type="project" value="UniProtKB"/>
</dbReference>
<dbReference type="GO" id="GO:0005759">
    <property type="term" value="C:mitochondrial matrix"/>
    <property type="evidence" value="ECO:0000314"/>
    <property type="project" value="HGNC-UCL"/>
</dbReference>
<dbReference type="GO" id="GO:0005739">
    <property type="term" value="C:mitochondrion"/>
    <property type="evidence" value="ECO:0000314"/>
    <property type="project" value="UniProtKB"/>
</dbReference>
<dbReference type="GO" id="GO:0005654">
    <property type="term" value="C:nucleoplasm"/>
    <property type="evidence" value="ECO:0000314"/>
    <property type="project" value="HPA"/>
</dbReference>
<dbReference type="GO" id="GO:0005634">
    <property type="term" value="C:nucleus"/>
    <property type="evidence" value="ECO:0000314"/>
    <property type="project" value="UniProtKB"/>
</dbReference>
<dbReference type="GO" id="GO:0031071">
    <property type="term" value="F:cysteine desulfurase activity"/>
    <property type="evidence" value="ECO:0000314"/>
    <property type="project" value="UniProtKB"/>
</dbReference>
<dbReference type="GO" id="GO:0051536">
    <property type="term" value="F:iron-sulfur cluster binding"/>
    <property type="evidence" value="ECO:0007669"/>
    <property type="project" value="UniProtKB-KW"/>
</dbReference>
<dbReference type="GO" id="GO:0046872">
    <property type="term" value="F:metal ion binding"/>
    <property type="evidence" value="ECO:0007669"/>
    <property type="project" value="UniProtKB-KW"/>
</dbReference>
<dbReference type="GO" id="GO:0042803">
    <property type="term" value="F:protein homodimerization activity"/>
    <property type="evidence" value="ECO:0000314"/>
    <property type="project" value="UniProtKB"/>
</dbReference>
<dbReference type="GO" id="GO:0030170">
    <property type="term" value="F:pyridoxal phosphate binding"/>
    <property type="evidence" value="ECO:0007669"/>
    <property type="project" value="InterPro"/>
</dbReference>
<dbReference type="GO" id="GO:0097163">
    <property type="term" value="F:sulfur carrier activity"/>
    <property type="evidence" value="ECO:0000314"/>
    <property type="project" value="FlyBase"/>
</dbReference>
<dbReference type="GO" id="GO:0044571">
    <property type="term" value="P:[2Fe-2S] cluster assembly"/>
    <property type="evidence" value="ECO:0000314"/>
    <property type="project" value="UniProtKB"/>
</dbReference>
<dbReference type="GO" id="GO:0044572">
    <property type="term" value="P:[4Fe-4S] cluster assembly"/>
    <property type="evidence" value="ECO:0000314"/>
    <property type="project" value="UniProtKB"/>
</dbReference>
<dbReference type="GO" id="GO:0016226">
    <property type="term" value="P:iron-sulfur cluster assembly"/>
    <property type="evidence" value="ECO:0000314"/>
    <property type="project" value="HGNC-UCL"/>
</dbReference>
<dbReference type="GO" id="GO:0006777">
    <property type="term" value="P:Mo-molybdopterin cofactor biosynthetic process"/>
    <property type="evidence" value="ECO:0007669"/>
    <property type="project" value="UniProtKB-KW"/>
</dbReference>
<dbReference type="GO" id="GO:0043545">
    <property type="term" value="P:molybdopterin cofactor metabolic process"/>
    <property type="evidence" value="ECO:0000314"/>
    <property type="project" value="UniProtKB"/>
</dbReference>
<dbReference type="FunFam" id="3.40.640.10:FF:000003">
    <property type="entry name" value="Cysteine desulfurase IscS"/>
    <property type="match status" value="1"/>
</dbReference>
<dbReference type="FunFam" id="3.90.1150.10:FF:000002">
    <property type="entry name" value="Cysteine desulfurase IscS"/>
    <property type="match status" value="1"/>
</dbReference>
<dbReference type="Gene3D" id="3.90.1150.10">
    <property type="entry name" value="Aspartate Aminotransferase, domain 1"/>
    <property type="match status" value="1"/>
</dbReference>
<dbReference type="Gene3D" id="3.40.640.10">
    <property type="entry name" value="Type I PLP-dependent aspartate aminotransferase-like (Major domain)"/>
    <property type="match status" value="1"/>
</dbReference>
<dbReference type="HAMAP" id="MF_00331">
    <property type="entry name" value="Cys_desulf_IscS"/>
    <property type="match status" value="1"/>
</dbReference>
<dbReference type="InterPro" id="IPR000192">
    <property type="entry name" value="Aminotrans_V_dom"/>
</dbReference>
<dbReference type="InterPro" id="IPR020578">
    <property type="entry name" value="Aminotrans_V_PyrdxlP_BS"/>
</dbReference>
<dbReference type="InterPro" id="IPR010240">
    <property type="entry name" value="Cys_deSase_IscS"/>
</dbReference>
<dbReference type="InterPro" id="IPR016454">
    <property type="entry name" value="Cysteine_dSase"/>
</dbReference>
<dbReference type="InterPro" id="IPR015424">
    <property type="entry name" value="PyrdxlP-dep_Trfase"/>
</dbReference>
<dbReference type="InterPro" id="IPR015421">
    <property type="entry name" value="PyrdxlP-dep_Trfase_major"/>
</dbReference>
<dbReference type="InterPro" id="IPR015422">
    <property type="entry name" value="PyrdxlP-dep_Trfase_small"/>
</dbReference>
<dbReference type="NCBIfam" id="TIGR02006">
    <property type="entry name" value="IscS"/>
    <property type="match status" value="1"/>
</dbReference>
<dbReference type="NCBIfam" id="NF002806">
    <property type="entry name" value="PRK02948.1"/>
    <property type="match status" value="1"/>
</dbReference>
<dbReference type="NCBIfam" id="NF010611">
    <property type="entry name" value="PRK14012.1"/>
    <property type="match status" value="1"/>
</dbReference>
<dbReference type="PANTHER" id="PTHR11601:SF34">
    <property type="entry name" value="CYSTEINE DESULFURASE"/>
    <property type="match status" value="1"/>
</dbReference>
<dbReference type="PANTHER" id="PTHR11601">
    <property type="entry name" value="CYSTEINE DESULFURYLASE FAMILY MEMBER"/>
    <property type="match status" value="1"/>
</dbReference>
<dbReference type="Pfam" id="PF00266">
    <property type="entry name" value="Aminotran_5"/>
    <property type="match status" value="1"/>
</dbReference>
<dbReference type="PIRSF" id="PIRSF005572">
    <property type="entry name" value="NifS"/>
    <property type="match status" value="1"/>
</dbReference>
<dbReference type="SUPFAM" id="SSF53383">
    <property type="entry name" value="PLP-dependent transferases"/>
    <property type="match status" value="1"/>
</dbReference>
<dbReference type="PROSITE" id="PS00595">
    <property type="entry name" value="AA_TRANSFER_CLASS_5"/>
    <property type="match status" value="1"/>
</dbReference>
<evidence type="ECO:0000250" key="1">
    <source>
        <dbReference type="UniProtKB" id="O29689"/>
    </source>
</evidence>
<evidence type="ECO:0000250" key="2">
    <source>
        <dbReference type="UniProtKB" id="Q9H1K1"/>
    </source>
</evidence>
<evidence type="ECO:0000250" key="3">
    <source>
        <dbReference type="UniProtKB" id="Q9Z1J3"/>
    </source>
</evidence>
<evidence type="ECO:0000255" key="4"/>
<evidence type="ECO:0000269" key="5">
    <source>
    </source>
</evidence>
<evidence type="ECO:0000269" key="6">
    <source>
    </source>
</evidence>
<evidence type="ECO:0000269" key="7">
    <source>
    </source>
</evidence>
<evidence type="ECO:0000269" key="8">
    <source>
    </source>
</evidence>
<evidence type="ECO:0000269" key="9">
    <source>
    </source>
</evidence>
<evidence type="ECO:0000269" key="10">
    <source>
    </source>
</evidence>
<evidence type="ECO:0000269" key="11">
    <source>
    </source>
</evidence>
<evidence type="ECO:0000269" key="12">
    <source>
    </source>
</evidence>
<evidence type="ECO:0000269" key="13">
    <source>
    </source>
</evidence>
<evidence type="ECO:0000269" key="14">
    <source>
    </source>
</evidence>
<evidence type="ECO:0000269" key="15">
    <source>
    </source>
</evidence>
<evidence type="ECO:0000269" key="16">
    <source>
    </source>
</evidence>
<evidence type="ECO:0000269" key="17">
    <source>
    </source>
</evidence>
<evidence type="ECO:0000269" key="18">
    <source>
    </source>
</evidence>
<evidence type="ECO:0000269" key="19">
    <source>
    </source>
</evidence>
<evidence type="ECO:0000303" key="20">
    <source>
    </source>
</evidence>
<evidence type="ECO:0000303" key="21">
    <source>
    </source>
</evidence>
<evidence type="ECO:0000303" key="22">
    <source>
    </source>
</evidence>
<evidence type="ECO:0000303" key="23">
    <source>
    </source>
</evidence>
<evidence type="ECO:0000303" key="24">
    <source>
    </source>
</evidence>
<evidence type="ECO:0000305" key="25"/>
<evidence type="ECO:0000305" key="26">
    <source>
    </source>
</evidence>
<evidence type="ECO:0000305" key="27">
    <source>
    </source>
</evidence>
<evidence type="ECO:0000305" key="28">
    <source>
    </source>
</evidence>
<evidence type="ECO:0000305" key="29">
    <source>
    </source>
</evidence>
<evidence type="ECO:0000305" key="30">
    <source>
    </source>
</evidence>
<evidence type="ECO:0000312" key="31">
    <source>
        <dbReference type="HGNC" id="HGNC:15910"/>
    </source>
</evidence>
<evidence type="ECO:0007744" key="32">
    <source>
        <dbReference type="PDB" id="5WGB"/>
    </source>
</evidence>
<evidence type="ECO:0007744" key="33">
    <source>
        <dbReference type="PDB" id="5WKP"/>
    </source>
</evidence>
<evidence type="ECO:0007744" key="34">
    <source>
        <dbReference type="PDB" id="5WLW"/>
    </source>
</evidence>
<evidence type="ECO:0007744" key="35">
    <source>
        <dbReference type="PDB" id="6NZU"/>
    </source>
</evidence>
<evidence type="ECO:0007744" key="36">
    <source>
        <dbReference type="PDB" id="6UXE"/>
    </source>
</evidence>
<evidence type="ECO:0007744" key="37">
    <source>
        <dbReference type="PDB" id="6W1D"/>
    </source>
</evidence>
<evidence type="ECO:0007744" key="38">
    <source>
        <dbReference type="PDB" id="6WI2"/>
    </source>
</evidence>
<evidence type="ECO:0007744" key="39">
    <source>
        <dbReference type="PDB" id="6WIH"/>
    </source>
</evidence>
<evidence type="ECO:0007744" key="40">
    <source>
        <dbReference type="PDB" id="7RTK"/>
    </source>
</evidence>
<evidence type="ECO:0007829" key="41">
    <source>
        <dbReference type="PDB" id="6UXE"/>
    </source>
</evidence>
<evidence type="ECO:0007829" key="42">
    <source>
        <dbReference type="PDB" id="6WIH"/>
    </source>
</evidence>
<evidence type="ECO:0007829" key="43">
    <source>
        <dbReference type="PDB" id="7RTK"/>
    </source>
</evidence>
<protein>
    <recommendedName>
        <fullName evidence="25">Cysteine desulfurase</fullName>
        <ecNumber evidence="6 7 13">2.8.1.7</ecNumber>
    </recommendedName>
</protein>
<organism>
    <name type="scientific">Homo sapiens</name>
    <name type="common">Human</name>
    <dbReference type="NCBI Taxonomy" id="9606"/>
    <lineage>
        <taxon>Eukaryota</taxon>
        <taxon>Metazoa</taxon>
        <taxon>Chordata</taxon>
        <taxon>Craniata</taxon>
        <taxon>Vertebrata</taxon>
        <taxon>Euteleostomi</taxon>
        <taxon>Mammalia</taxon>
        <taxon>Eutheria</taxon>
        <taxon>Euarchontoglires</taxon>
        <taxon>Primates</taxon>
        <taxon>Haplorrhini</taxon>
        <taxon>Catarrhini</taxon>
        <taxon>Hominidae</taxon>
        <taxon>Homo</taxon>
    </lineage>
</organism>
<name>NFS1_HUMAN</name>
<comment type="function">
    <molecule>Isoform Mitochondrial</molecule>
    <text evidence="2 3 7 13 15">Cysteine desulfurase, of the core iron-sulfur cluster (ISC) assembly complex, that catalyzes the desulfuration of L-cysteine to L-alanine, as component of the cysteine desulfurase complex, leading to the formation of a cysteine persulfide intermediate at the active site cysteine residue and participates in the [2Fe-2S] clusters assembly on the scaffolding protein ISCU (PubMed:18650437, PubMed:29097656, PubMed:31101807). The persulfide is then transferred on the flexible Cys loop from the catalytic site of NFS1 to the surface of NFS1 (PubMed:29097656). After the NFS1-linked persulfide sulfur is transferred to one of the conserved Cys residues of the scaffold, a reaction assisted by FXN (By similarity). The core iron-sulfur cluster (ISC) assembly complex is involved in the de novo synthesis of a [2Fe-2S] cluster, the first step of the mitochondrial iron-sulfur protein biogenesis. This process is initiated by the cysteine desulfurase complex (NFS1:LYRM4:NDUFAB1) that produces persulfide which is delivered on the scaffold protein ISCU in a FXN-dependent manner. Then this complex is stabilized by FDX2 which provides reducing equivalents to accomplish the [2Fe-2S] cluster assembly. Finally, the [2Fe-2S] cluster is transferred from ISCU to chaperone proteins, including HSCB, HSPA9 and GLRX5 (By similarity).</text>
</comment>
<comment type="function">
    <molecule>Isoform Cytoplasmic</molecule>
    <text evidence="6 7 9">May catalyze the desulfuration of L-cysteine to L-alanine as component of the cysteine desulfurase complex (NFS1:LYRM4), leading to the formation of a cysteine persulfide intermediate (PubMed:16527810, PubMed:18650437). Acts as a sulfur donor for MOCS3 by transferring the sulfur of the cysteine persulfide intermediate on MOCS3 (PubMed:18650437, PubMed:23593335).</text>
</comment>
<comment type="catalytic activity">
    <molecule>Isoform Mitochondrial</molecule>
    <reaction evidence="7 13 15">
        <text>(sulfur carrier)-H + L-cysteine = (sulfur carrier)-SH + L-alanine</text>
        <dbReference type="Rhea" id="RHEA:43892"/>
        <dbReference type="Rhea" id="RHEA-COMP:14737"/>
        <dbReference type="Rhea" id="RHEA-COMP:14739"/>
        <dbReference type="ChEBI" id="CHEBI:29917"/>
        <dbReference type="ChEBI" id="CHEBI:35235"/>
        <dbReference type="ChEBI" id="CHEBI:57972"/>
        <dbReference type="ChEBI" id="CHEBI:64428"/>
        <dbReference type="EC" id="2.8.1.7"/>
    </reaction>
</comment>
<comment type="catalytic activity">
    <molecule>Isoform Cytoplasmic</molecule>
    <reaction evidence="6 26">
        <text>(sulfur carrier)-H + L-cysteine = (sulfur carrier)-SH + L-alanine</text>
        <dbReference type="Rhea" id="RHEA:43892"/>
        <dbReference type="Rhea" id="RHEA-COMP:14737"/>
        <dbReference type="Rhea" id="RHEA-COMP:14739"/>
        <dbReference type="ChEBI" id="CHEBI:29917"/>
        <dbReference type="ChEBI" id="CHEBI:35235"/>
        <dbReference type="ChEBI" id="CHEBI:57972"/>
        <dbReference type="ChEBI" id="CHEBI:64428"/>
        <dbReference type="EC" id="2.8.1.7"/>
    </reaction>
</comment>
<comment type="catalytic activity">
    <molecule>Isoform Cytoplasmic</molecule>
    <reaction evidence="7 9">
        <text>L-cysteinyl-[cysteine desulfurase] + L-cysteine = S-sulfanyl-L-cysteinyl-[cysteine desulfurase] + L-alanine</text>
        <dbReference type="Rhea" id="RHEA:17457"/>
        <dbReference type="Rhea" id="RHEA-COMP:12157"/>
        <dbReference type="Rhea" id="RHEA-COMP:12158"/>
        <dbReference type="ChEBI" id="CHEBI:29950"/>
        <dbReference type="ChEBI" id="CHEBI:35235"/>
        <dbReference type="ChEBI" id="CHEBI:57972"/>
        <dbReference type="ChEBI" id="CHEBI:61963"/>
    </reaction>
</comment>
<comment type="cofactor">
    <cofactor evidence="13 15 18">
        <name>pyridoxal 5'-phosphate</name>
        <dbReference type="ChEBI" id="CHEBI:597326"/>
    </cofactor>
</comment>
<comment type="activity regulation">
    <text evidence="7">Active only in complex with LYRM4.</text>
</comment>
<comment type="biophysicochemical properties">
    <kinetics>
        <KM evidence="7">434.75 uM for L-cysteine</KM>
        <text evidence="7">Kinetic parameter was determined for the protein lacking the 55 N-terminal amino acids and in a complex with LYRM4.</text>
    </kinetics>
    <phDependence>
        <text evidence="7">Optimum pH is 8.</text>
    </phDependence>
    <temperatureDependence>
        <text evidence="26">Optimum temperature is 46 degrees Celsius.</text>
    </temperatureDependence>
</comment>
<comment type="subunit">
    <molecule>Isoform Mitochondrial</molecule>
    <text evidence="3 5 8 10 12 13 15 16 18 27 29 30">Homodimer (PubMed:29097656, PubMed:31101807). Component of the mitochondrial core iron-sulfur cluster (ISC) complex composed of NFS1, LYRM4, NDUFAB1, ISCU, FXN, and FDX2; this complex is a heterohexamer containing two copies of each monomer (Probable). Component of cyteine desulfurase complex composed of NFS1, LYRM4 and NDUFAB1; this complex contributes to the activation of cysteine desulfurase activity and NFS1 stabilization (PubMed:31664822, PubMed:34824239). Interacts (homodimer form) with ISCU (D-state); each monomer interacts with the C-terminal regions of each NFS1 monomer (PubMed:11060020, PubMed:23940031, PubMed:29097656). Interacts with HSPA9 (PubMed:26702583). Interacts (via homodimer form) with FDX2 (PubMed:29097656). Interacts (via homodimer form) with FXN (PubMed:31101807). Interacts with LYRM4 (PubMed:19454487, PubMed:29097656). Component of a complex composed of FXN, NFS1, LYRM4 and ISCU (By similarity).</text>
</comment>
<comment type="subunit">
    <molecule>Isoform Cytoplasmic</molecule>
    <text evidence="6 7 9">Monomer (PubMed:16527810). Homodimer (PubMed:16527810, PubMed:18650437, PubMed:23593335). Oligomer (PubMed:18650437). Interacts with ISCU (PubMed:16527810). Component of the cysteine desulfurase complex composed of NFS1 and LYRM4; this complex contributes to the activation of cysteine desulfurase activity (PubMed:18650437). Interacts with MOCS3 (PubMed:18650437, PubMed:23593335).</text>
</comment>
<comment type="interaction">
    <interactant intactId="EBI-1751791">
        <id>Q9Y697</id>
    </interactant>
    <interactant intactId="EBI-10897372">
        <id>Q9NZJ6</id>
        <label>COQ3</label>
    </interactant>
    <organismsDiffer>false</organismsDiffer>
    <experiments>3</experiments>
</comment>
<comment type="interaction">
    <interactant intactId="EBI-1751791">
        <id>Q9Y697</id>
    </interactant>
    <interactant intactId="EBI-3920810">
        <id>Q9HD34</id>
        <label>LYRM4</label>
    </interactant>
    <organismsDiffer>false</organismsDiffer>
    <experiments>10</experiments>
</comment>
<comment type="subcellular location">
    <molecule>Isoform Mitochondrial</molecule>
    <subcellularLocation>
        <location evidence="8 9 12 14 19">Mitochondrion</location>
    </subcellularLocation>
</comment>
<comment type="subcellular location">
    <molecule>Isoform Cytoplasmic</molecule>
    <subcellularLocation>
        <location evidence="9 14 19">Cytoplasm</location>
    </subcellularLocation>
    <subcellularLocation>
        <location evidence="8 9 19">Nucleus</location>
    </subcellularLocation>
    <subcellularLocation>
        <location evidence="14">Cytoplasm</location>
        <location evidence="14">Cytoskeleton</location>
        <location evidence="14">Microtubule organizing center</location>
        <location evidence="14">Centrosome</location>
    </subcellularLocation>
</comment>
<comment type="alternative products">
    <event type="alternative splicing"/>
    <event type="alternative initiation"/>
    <isoform>
        <id>Q9Y697-1</id>
        <name>Mitochondrial</name>
        <sequence type="displayed"/>
    </isoform>
    <isoform>
        <id>Q9Y697-2</id>
        <name>Cytoplasmic</name>
        <sequence type="described" ref="VSP_018646"/>
    </isoform>
    <isoform>
        <id>Q9Y697-3</id>
        <name>3</name>
        <sequence type="described" ref="VSP_045860"/>
    </isoform>
    <text>Individual cells may vary AUG utilization in accordance with changes in metabolic status, the cytosolic pH being a strong determinant of this modulation.</text>
</comment>
<comment type="tissue specificity">
    <text evidence="19">Predominantly expressed in heart and skeletal muscle. Also found in brain, liver and pancreas.</text>
</comment>
<comment type="PTM">
    <text evidence="3">N-gluconoylated.</text>
</comment>
<comment type="PTM">
    <text evidence="3">Cysteine persulfide intermediate is reduced by thiol-containing molecules like glutathione and L-cysteine. Persulfide reduction is a rate-limiting step of cysteine desulfurase catalytic cycle.</text>
</comment>
<comment type="disease" evidence="11 17">
    <disease id="DI-06148">
        <name>Combined oxidative phosphorylation deficiency 52</name>
        <acronym>COXPD52</acronym>
        <description>An autosomal recessive mitochondrial disorder with onset in infancy, characterized by lactic acidemia, hypotonia, respiratory chain complex II and III deficiency, multisystem organ failure and abnormal mitochondria.</description>
        <dbReference type="MIM" id="619386"/>
    </disease>
    <text>The disease is caused by variants affecting the gene represented in this entry.</text>
</comment>
<comment type="similarity">
    <text evidence="25">Belongs to the class-V pyridoxal-phosphate-dependent aminotransferase family. NifS/IscS subfamily.</text>
</comment>
<reference key="1">
    <citation type="journal article" date="1998" name="Mol. Cell">
        <title>Targeting of a human iron-sulfur cluster assembly enzyme, nifs, to different subcellular compartments is regulated through alternative AUG utilization.</title>
        <authorList>
            <person name="Land T."/>
            <person name="Rouault T.A."/>
        </authorList>
    </citation>
    <scope>NUCLEOTIDE SEQUENCE [MRNA] (ISOFORM CYTOPLASMIC)</scope>
    <scope>ALTERNATIVE INITIATION</scope>
    <scope>SUBCELLULAR LOCATION</scope>
    <scope>TISSUE SPECIFICITY</scope>
</reference>
<reference key="2">
    <citation type="submission" date="2002-10" db="EMBL/GenBank/DDBJ databases">
        <authorList>
            <person name="Land T."/>
            <person name="Rouault T.A."/>
        </authorList>
    </citation>
    <scope>SEQUENCE REVISION TO 380-402</scope>
</reference>
<reference key="3">
    <citation type="journal article" date="2004" name="Nat. Genet.">
        <title>Complete sequencing and characterization of 21,243 full-length human cDNAs.</title>
        <authorList>
            <person name="Ota T."/>
            <person name="Suzuki Y."/>
            <person name="Nishikawa T."/>
            <person name="Otsuki T."/>
            <person name="Sugiyama T."/>
            <person name="Irie R."/>
            <person name="Wakamatsu A."/>
            <person name="Hayashi K."/>
            <person name="Sato H."/>
            <person name="Nagai K."/>
            <person name="Kimura K."/>
            <person name="Makita H."/>
            <person name="Sekine M."/>
            <person name="Obayashi M."/>
            <person name="Nishi T."/>
            <person name="Shibahara T."/>
            <person name="Tanaka T."/>
            <person name="Ishii S."/>
            <person name="Yamamoto J."/>
            <person name="Saito K."/>
            <person name="Kawai Y."/>
            <person name="Isono Y."/>
            <person name="Nakamura Y."/>
            <person name="Nagahari K."/>
            <person name="Murakami K."/>
            <person name="Yasuda T."/>
            <person name="Iwayanagi T."/>
            <person name="Wagatsuma M."/>
            <person name="Shiratori A."/>
            <person name="Sudo H."/>
            <person name="Hosoiri T."/>
            <person name="Kaku Y."/>
            <person name="Kodaira H."/>
            <person name="Kondo H."/>
            <person name="Sugawara M."/>
            <person name="Takahashi M."/>
            <person name="Kanda K."/>
            <person name="Yokoi T."/>
            <person name="Furuya T."/>
            <person name="Kikkawa E."/>
            <person name="Omura Y."/>
            <person name="Abe K."/>
            <person name="Kamihara K."/>
            <person name="Katsuta N."/>
            <person name="Sato K."/>
            <person name="Tanikawa M."/>
            <person name="Yamazaki M."/>
            <person name="Ninomiya K."/>
            <person name="Ishibashi T."/>
            <person name="Yamashita H."/>
            <person name="Murakawa K."/>
            <person name="Fujimori K."/>
            <person name="Tanai H."/>
            <person name="Kimata M."/>
            <person name="Watanabe M."/>
            <person name="Hiraoka S."/>
            <person name="Chiba Y."/>
            <person name="Ishida S."/>
            <person name="Ono Y."/>
            <person name="Takiguchi S."/>
            <person name="Watanabe S."/>
            <person name="Yosida M."/>
            <person name="Hotuta T."/>
            <person name="Kusano J."/>
            <person name="Kanehori K."/>
            <person name="Takahashi-Fujii A."/>
            <person name="Hara H."/>
            <person name="Tanase T.-O."/>
            <person name="Nomura Y."/>
            <person name="Togiya S."/>
            <person name="Komai F."/>
            <person name="Hara R."/>
            <person name="Takeuchi K."/>
            <person name="Arita M."/>
            <person name="Imose N."/>
            <person name="Musashino K."/>
            <person name="Yuuki H."/>
            <person name="Oshima A."/>
            <person name="Sasaki N."/>
            <person name="Aotsuka S."/>
            <person name="Yoshikawa Y."/>
            <person name="Matsunawa H."/>
            <person name="Ichihara T."/>
            <person name="Shiohata N."/>
            <person name="Sano S."/>
            <person name="Moriya S."/>
            <person name="Momiyama H."/>
            <person name="Satoh N."/>
            <person name="Takami S."/>
            <person name="Terashima Y."/>
            <person name="Suzuki O."/>
            <person name="Nakagawa S."/>
            <person name="Senoh A."/>
            <person name="Mizoguchi H."/>
            <person name="Goto Y."/>
            <person name="Shimizu F."/>
            <person name="Wakebe H."/>
            <person name="Hishigaki H."/>
            <person name="Watanabe T."/>
            <person name="Sugiyama A."/>
            <person name="Takemoto M."/>
            <person name="Kawakami B."/>
            <person name="Yamazaki M."/>
            <person name="Watanabe K."/>
            <person name="Kumagai A."/>
            <person name="Itakura S."/>
            <person name="Fukuzumi Y."/>
            <person name="Fujimori Y."/>
            <person name="Komiyama M."/>
            <person name="Tashiro H."/>
            <person name="Tanigami A."/>
            <person name="Fujiwara T."/>
            <person name="Ono T."/>
            <person name="Yamada K."/>
            <person name="Fujii Y."/>
            <person name="Ozaki K."/>
            <person name="Hirao M."/>
            <person name="Ohmori Y."/>
            <person name="Kawabata A."/>
            <person name="Hikiji T."/>
            <person name="Kobatake N."/>
            <person name="Inagaki H."/>
            <person name="Ikema Y."/>
            <person name="Okamoto S."/>
            <person name="Okitani R."/>
            <person name="Kawakami T."/>
            <person name="Noguchi S."/>
            <person name="Itoh T."/>
            <person name="Shigeta K."/>
            <person name="Senba T."/>
            <person name="Matsumura K."/>
            <person name="Nakajima Y."/>
            <person name="Mizuno T."/>
            <person name="Morinaga M."/>
            <person name="Sasaki M."/>
            <person name="Togashi T."/>
            <person name="Oyama M."/>
            <person name="Hata H."/>
            <person name="Watanabe M."/>
            <person name="Komatsu T."/>
            <person name="Mizushima-Sugano J."/>
            <person name="Satoh T."/>
            <person name="Shirai Y."/>
            <person name="Takahashi Y."/>
            <person name="Nakagawa K."/>
            <person name="Okumura K."/>
            <person name="Nagase T."/>
            <person name="Nomura N."/>
            <person name="Kikuchi H."/>
            <person name="Masuho Y."/>
            <person name="Yamashita R."/>
            <person name="Nakai K."/>
            <person name="Yada T."/>
            <person name="Nakamura Y."/>
            <person name="Ohara O."/>
            <person name="Isogai T."/>
            <person name="Sugano S."/>
        </authorList>
    </citation>
    <scope>NUCLEOTIDE SEQUENCE [LARGE SCALE MRNA] (ISOFORMS CYTOPLASMIC AND 3)</scope>
    <source>
        <tissue>Testis</tissue>
    </source>
</reference>
<reference key="4">
    <citation type="journal article" date="2001" name="Nature">
        <title>The DNA sequence and comparative analysis of human chromosome 20.</title>
        <authorList>
            <person name="Deloukas P."/>
            <person name="Matthews L.H."/>
            <person name="Ashurst J.L."/>
            <person name="Burton J."/>
            <person name="Gilbert J.G.R."/>
            <person name="Jones M."/>
            <person name="Stavrides G."/>
            <person name="Almeida J.P."/>
            <person name="Babbage A.K."/>
            <person name="Bagguley C.L."/>
            <person name="Bailey J."/>
            <person name="Barlow K.F."/>
            <person name="Bates K.N."/>
            <person name="Beard L.M."/>
            <person name="Beare D.M."/>
            <person name="Beasley O.P."/>
            <person name="Bird C.P."/>
            <person name="Blakey S.E."/>
            <person name="Bridgeman A.M."/>
            <person name="Brown A.J."/>
            <person name="Buck D."/>
            <person name="Burrill W.D."/>
            <person name="Butler A.P."/>
            <person name="Carder C."/>
            <person name="Carter N.P."/>
            <person name="Chapman J.C."/>
            <person name="Clamp M."/>
            <person name="Clark G."/>
            <person name="Clark L.N."/>
            <person name="Clark S.Y."/>
            <person name="Clee C.M."/>
            <person name="Clegg S."/>
            <person name="Cobley V.E."/>
            <person name="Collier R.E."/>
            <person name="Connor R.E."/>
            <person name="Corby N.R."/>
            <person name="Coulson A."/>
            <person name="Coville G.J."/>
            <person name="Deadman R."/>
            <person name="Dhami P.D."/>
            <person name="Dunn M."/>
            <person name="Ellington A.G."/>
            <person name="Frankland J.A."/>
            <person name="Fraser A."/>
            <person name="French L."/>
            <person name="Garner P."/>
            <person name="Grafham D.V."/>
            <person name="Griffiths C."/>
            <person name="Griffiths M.N.D."/>
            <person name="Gwilliam R."/>
            <person name="Hall R.E."/>
            <person name="Hammond S."/>
            <person name="Harley J.L."/>
            <person name="Heath P.D."/>
            <person name="Ho S."/>
            <person name="Holden J.L."/>
            <person name="Howden P.J."/>
            <person name="Huckle E."/>
            <person name="Hunt A.R."/>
            <person name="Hunt S.E."/>
            <person name="Jekosch K."/>
            <person name="Johnson C.M."/>
            <person name="Johnson D."/>
            <person name="Kay M.P."/>
            <person name="Kimberley A.M."/>
            <person name="King A."/>
            <person name="Knights A."/>
            <person name="Laird G.K."/>
            <person name="Lawlor S."/>
            <person name="Lehvaeslaiho M.H."/>
            <person name="Leversha M.A."/>
            <person name="Lloyd C."/>
            <person name="Lloyd D.M."/>
            <person name="Lovell J.D."/>
            <person name="Marsh V.L."/>
            <person name="Martin S.L."/>
            <person name="McConnachie L.J."/>
            <person name="McLay K."/>
            <person name="McMurray A.A."/>
            <person name="Milne S.A."/>
            <person name="Mistry D."/>
            <person name="Moore M.J.F."/>
            <person name="Mullikin J.C."/>
            <person name="Nickerson T."/>
            <person name="Oliver K."/>
            <person name="Parker A."/>
            <person name="Patel R."/>
            <person name="Pearce T.A.V."/>
            <person name="Peck A.I."/>
            <person name="Phillimore B.J.C.T."/>
            <person name="Prathalingam S.R."/>
            <person name="Plumb R.W."/>
            <person name="Ramsay H."/>
            <person name="Rice C.M."/>
            <person name="Ross M.T."/>
            <person name="Scott C.E."/>
            <person name="Sehra H.K."/>
            <person name="Shownkeen R."/>
            <person name="Sims S."/>
            <person name="Skuce C.D."/>
            <person name="Smith M.L."/>
            <person name="Soderlund C."/>
            <person name="Steward C.A."/>
            <person name="Sulston J.E."/>
            <person name="Swann R.M."/>
            <person name="Sycamore N."/>
            <person name="Taylor R."/>
            <person name="Tee L."/>
            <person name="Thomas D.W."/>
            <person name="Thorpe A."/>
            <person name="Tracey A."/>
            <person name="Tromans A.C."/>
            <person name="Vaudin M."/>
            <person name="Wall M."/>
            <person name="Wallis J.M."/>
            <person name="Whitehead S.L."/>
            <person name="Whittaker P."/>
            <person name="Willey D.L."/>
            <person name="Williams L."/>
            <person name="Williams S.A."/>
            <person name="Wilming L."/>
            <person name="Wray P.W."/>
            <person name="Hubbard T."/>
            <person name="Durbin R.M."/>
            <person name="Bentley D.R."/>
            <person name="Beck S."/>
            <person name="Rogers J."/>
        </authorList>
    </citation>
    <scope>NUCLEOTIDE SEQUENCE [LARGE SCALE GENOMIC DNA]</scope>
</reference>
<reference key="5">
    <citation type="submission" date="2005-09" db="EMBL/GenBank/DDBJ databases">
        <authorList>
            <person name="Mural R.J."/>
            <person name="Istrail S."/>
            <person name="Sutton G.G."/>
            <person name="Florea L."/>
            <person name="Halpern A.L."/>
            <person name="Mobarry C.M."/>
            <person name="Lippert R."/>
            <person name="Walenz B."/>
            <person name="Shatkay H."/>
            <person name="Dew I."/>
            <person name="Miller J.R."/>
            <person name="Flanigan M.J."/>
            <person name="Edwards N.J."/>
            <person name="Bolanos R."/>
            <person name="Fasulo D."/>
            <person name="Halldorsson B.V."/>
            <person name="Hannenhalli S."/>
            <person name="Turner R."/>
            <person name="Yooseph S."/>
            <person name="Lu F."/>
            <person name="Nusskern D.R."/>
            <person name="Shue B.C."/>
            <person name="Zheng X.H."/>
            <person name="Zhong F."/>
            <person name="Delcher A.L."/>
            <person name="Huson D.H."/>
            <person name="Kravitz S.A."/>
            <person name="Mouchard L."/>
            <person name="Reinert K."/>
            <person name="Remington K.A."/>
            <person name="Clark A.G."/>
            <person name="Waterman M.S."/>
            <person name="Eichler E.E."/>
            <person name="Adams M.D."/>
            <person name="Hunkapiller M.W."/>
            <person name="Myers E.W."/>
            <person name="Venter J.C."/>
        </authorList>
    </citation>
    <scope>NUCLEOTIDE SEQUENCE [LARGE SCALE GENOMIC DNA]</scope>
</reference>
<reference key="6">
    <citation type="journal article" date="2004" name="Genome Res.">
        <title>The status, quality, and expansion of the NIH full-length cDNA project: the Mammalian Gene Collection (MGC).</title>
        <authorList>
            <consortium name="The MGC Project Team"/>
        </authorList>
    </citation>
    <scope>NUCLEOTIDE SEQUENCE [LARGE SCALE MRNA] (ISOFORM CYTOPLASMIC)</scope>
    <source>
        <tissue>Pancreas</tissue>
    </source>
</reference>
<reference key="7">
    <citation type="journal article" date="2001" name="Yeast">
        <title>Characterization of 16 novel human genes showing high similarity to yeast sequences.</title>
        <authorList>
            <person name="Stanchi F."/>
            <person name="Bertocco E."/>
            <person name="Toppo S."/>
            <person name="Dioguardi R."/>
            <person name="Simionati B."/>
            <person name="Cannata N."/>
            <person name="Zimbello R."/>
            <person name="Lanfranchi G."/>
            <person name="Valle G."/>
        </authorList>
    </citation>
    <scope>NUCLEOTIDE SEQUENCE [MRNA] OF 140-457 (ISOFORM CYTOPLASMIC)</scope>
</reference>
<reference key="8">
    <citation type="journal article" date="2000" name="EMBO J.">
        <title>Distinct iron-sulfur cluster assembly complexes exist in the cytosol and mitochondria of human cells.</title>
        <authorList>
            <person name="Tong W.-H."/>
            <person name="Rouault T."/>
        </authorList>
    </citation>
    <scope>INTERACTION WITH ISCU</scope>
</reference>
<reference key="9">
    <citation type="journal article" date="2006" name="J. Biol. Chem.">
        <title>Roles of the mammalian cytosolic cysteine desulfurase, ISCS, and scaffold protein, ISCU, in iron-sulfur cluster assembly.</title>
        <authorList>
            <person name="Li K."/>
            <person name="Tong W.H."/>
            <person name="Hughes R.M."/>
            <person name="Rouault T.A."/>
        </authorList>
    </citation>
    <scope>FUNCTION (ISOFORM CYTOPLASMIC)</scope>
    <scope>CATALYTIC ACTIVITY (ISOFORM CYTOPLASMIC)</scope>
    <scope>INTERACTION WITH ISCU (ISOFORM CYTOPLASMIC)</scope>
    <scope>SUBUNIT (ISOFORM CYTOPLASMIC)</scope>
</reference>
<reference key="10">
    <citation type="journal article" date="2008" name="J. Biol. Chem.">
        <title>A novel role for human Nfs1 in the cytoplasm: Nfs1 acts as a sulfur donor for MOCS3, a protein involved in molybdenum cofactor biosynthesis.</title>
        <authorList>
            <person name="Marelja Z."/>
            <person name="Stoecklein W."/>
            <person name="Nimtz M."/>
            <person name="Leimkuehler S."/>
        </authorList>
    </citation>
    <scope>FUNCTION</scope>
    <scope>CATALYTIC ACTIVITY</scope>
    <scope>BIOPHYSICOCHEMICAL PROPERTIES</scope>
    <scope>INTERACTION WITH LYRM4 AND MOCS3</scope>
    <scope>ACTIVITY REGULATION</scope>
    <scope>PROBABLE ACTIVE SITE</scope>
    <scope>SULFHYDRATION AT CYS-381</scope>
</reference>
<reference key="11">
    <citation type="journal article" date="2009" name="Hum. Mol. Genet.">
        <title>Human ISD11 is essential for both iron-sulfur cluster assembly and maintenance of normal cellular iron homeostasis.</title>
        <authorList>
            <person name="Shi Y."/>
            <person name="Ghosh M.C."/>
            <person name="Tong W.H."/>
            <person name="Rouault T.A."/>
        </authorList>
    </citation>
    <scope>INTERACTION WITH LYRM4</scope>
    <scope>SUBCELLULAR LOCATION</scope>
</reference>
<reference key="12">
    <citation type="journal article" date="2011" name="BMC Syst. Biol.">
        <title>Initial characterization of the human central proteome.</title>
        <authorList>
            <person name="Burkard T.R."/>
            <person name="Planyavsky M."/>
            <person name="Kaupe I."/>
            <person name="Breitwieser F.P."/>
            <person name="Buerckstuemmer T."/>
            <person name="Bennett K.L."/>
            <person name="Superti-Furga G."/>
            <person name="Colinge J."/>
        </authorList>
    </citation>
    <scope>IDENTIFICATION BY MASS SPECTROMETRY [LARGE SCALE ANALYSIS]</scope>
</reference>
<reference key="13">
    <citation type="journal article" date="2011" name="PLoS ONE">
        <title>Mammalian frataxin: an essential function for cellular viability through an interaction with a preformed ISCU/NFS1/ISD11 iron-sulfur assembly complex.</title>
        <authorList>
            <person name="Schmucker S."/>
            <person name="Martelli A."/>
            <person name="Colin F."/>
            <person name="Page A."/>
            <person name="Wattenhofer-Donze M."/>
            <person name="Reutenauer L."/>
            <person name="Puccio H."/>
        </authorList>
    </citation>
    <scope>COMPONENT OF CORE (FE-S) CLUSTER ASSEMBLY COMPLEX</scope>
</reference>
<reference key="14">
    <citation type="journal article" date="2013" name="J. Biol. Chem.">
        <title>Human mitochondrial chaperone (mtHSP70) and cysteine desulfurase (NFS1) bind preferentially to the disordered conformation, whereas co-chaperone (HSC20) binds to the structured conformation of the iron-sulfur cluster scaffold protein (ISCU).</title>
        <authorList>
            <person name="Cai K."/>
            <person name="Frederick R.O."/>
            <person name="Kim J.H."/>
            <person name="Reinen N.M."/>
            <person name="Tonelli M."/>
            <person name="Markley J.L."/>
        </authorList>
    </citation>
    <scope>INTERACTION WITH ISCU</scope>
</reference>
<reference key="15">
    <citation type="journal article" date="2013" name="PLoS ONE">
        <title>The L-cysteine desulfurase NFS1 is localized in the cytosol where it provides the sulfur for molybdenum cofactor biosynthesis in humans.</title>
        <authorList>
            <person name="Marelja Z."/>
            <person name="Mullick Chowdhury M."/>
            <person name="Dosche C."/>
            <person name="Hille C."/>
            <person name="Baumann O."/>
            <person name="Loehmannsroeben H.G."/>
            <person name="Leimkuehler S."/>
        </authorList>
    </citation>
    <scope>FUNCTION</scope>
    <scope>CATALYTIC ACTIVITY</scope>
    <scope>INTERACTION WITH MOCS3</scope>
    <scope>SUBCELLULAR LOCATION</scope>
    <scope>PROBABLE ACTIVE SITE</scope>
    <scope>SULFHYDRATION AT CYS-381</scope>
</reference>
<reference key="16">
    <citation type="journal article" date="2015" name="Proteomics">
        <title>N-terminome analysis of the human mitochondrial proteome.</title>
        <authorList>
            <person name="Vaca Jacome A.S."/>
            <person name="Rabilloud T."/>
            <person name="Schaeffer-Reiss C."/>
            <person name="Rompais M."/>
            <person name="Ayoub D."/>
            <person name="Lane L."/>
            <person name="Bairoch A."/>
            <person name="Van Dorsselaer A."/>
            <person name="Carapito C."/>
        </authorList>
    </citation>
    <scope>IDENTIFICATION BY MASS SPECTROMETRY [LARGE SCALE ANALYSIS]</scope>
</reference>
<reference key="17">
    <citation type="journal article" date="2016" name="Mitochondrion">
        <title>Mitochondrial Hspa9/Mortalin regulates erythroid differentiation via iron-sulfur cluster assembly.</title>
        <authorList>
            <person name="Shan Y."/>
            <person name="Cortopassi G."/>
        </authorList>
    </citation>
    <scope>INTERACTION WITH HSPA9</scope>
    <scope>SUBCELLULAR LOCATION</scope>
</reference>
<reference key="18">
    <citation type="journal article" date="2019" name="Biochemistry">
        <title>Analysis of the Cellular Roles of MOCS3 Identifies a MOCS3-Independent Localization of NFS1 at the Tips of the Centrosome.</title>
        <authorList>
            <person name="Neukranz Y."/>
            <person name="Kotter A."/>
            <person name="Beilschmidt L."/>
            <person name="Marelja Z."/>
            <person name="Helm M."/>
            <person name="Graef R."/>
            <person name="Leimkuehler S."/>
        </authorList>
    </citation>
    <scope>SUBCELLULAR LOCATION</scope>
</reference>
<reference key="19">
    <citation type="journal article" date="2019" name="Biochemistry">
        <title>Structure of the Human ACP-ISD11 Heterodimer.</title>
        <authorList>
            <person name="Herrera M.G."/>
            <person name="Noguera M.E."/>
            <person name="Sewell K.E."/>
            <person name="Agudelo Suarez W.A."/>
            <person name="Capece L."/>
            <person name="Klinke S."/>
            <person name="Santos J."/>
        </authorList>
    </citation>
    <scope>INTERACTION WITH LYRM4</scope>
</reference>
<reference evidence="32 33 34" key="20">
    <citation type="journal article" date="2017" name="Nat. Commun.">
        <title>Structure and functional dynamics of the mitochondrial Fe/S cluster synthesis complex.</title>
        <authorList>
            <person name="Boniecki M.T."/>
            <person name="Freibert S.A."/>
            <person name="Muhlenhoff U."/>
            <person name="Lill R."/>
            <person name="Cygler M."/>
        </authorList>
    </citation>
    <scope>X-RAY CRYSTALLOGRAPHY (2.75 ANGSTROMS) OF 56-457 IN COMPLEX WITH ZINC ION; ISCU; LYRM4 AND PYRIDOXAL 5' PHOSPHATE</scope>
    <scope>CATALYTIC ACTIVITY</scope>
    <scope>FUNCTION</scope>
    <scope>SUBUNIT</scope>
    <scope>INTERACTION WITH ISCU; LYRM4 AND FDX2</scope>
    <scope>PYRIDOXAL 5' PHOSPHATE AT 258</scope>
    <scope>COFACTOR</scope>
    <scope>COMPONENT OF CORE (FE-S) CLUSTER ASSEMBLY COMPLEX</scope>
</reference>
<reference evidence="35" key="21">
    <citation type="journal article" date="2019" name="Nat. Commun.">
        <title>Structure of the human frataxin-bound iron-sulfur cluster assembly complex provides insight into its activation mechanism.</title>
        <authorList>
            <person name="Fox N.G."/>
            <person name="Yu X."/>
            <person name="Feng X."/>
            <person name="Bailey H.J."/>
            <person name="Martelli A."/>
            <person name="Nabhan J.F."/>
            <person name="Strain-Damerell C."/>
            <person name="Bulawa C."/>
            <person name="Yue W.W."/>
            <person name="Han S."/>
        </authorList>
    </citation>
    <scope>STRUCTURE BY ELECTRON MICROSCOPY (3.20 ANGSTROMS) OF 56-457 IN COMPLEX WITH ISCU; LYRM4; FXN AND PYRIDOXAL 5' PHOSPHATE</scope>
    <scope>SUBUNIT</scope>
    <scope>PYRIDOXAL 5' PHOSPHATE AT 258</scope>
    <scope>COFACTOR</scope>
    <scope>CATALYTIC ACTIVITY</scope>
    <scope>INTERACTION WITH FXN</scope>
    <scope>COMPONENT OF CORE (FE-S) CLUSTER ASSEMBLY COMPLEX</scope>
</reference>
<reference evidence="36 37 38 39 40" key="22">
    <citation type="journal article" date="2021" name="Nat. Commun.">
        <title>N-terminal tyrosine of ISCU2 triggers [2Fe-2S] cluster synthesis by ISCU2 dimerization.</title>
        <authorList>
            <person name="Freibert S.A."/>
            <person name="Boniecki M.T."/>
            <person name="Stuempfig C."/>
            <person name="Schulz V."/>
            <person name="Krapoth N."/>
            <person name="Winge D.R."/>
            <person name="Muehlenhoff U."/>
            <person name="Stehling O."/>
            <person name="Cygler M."/>
            <person name="Lill R."/>
        </authorList>
    </citation>
    <scope>X-RAY CRYSTALLOGRAPHY (1.57 ANGSTROMS) OF 56-457 IN COMPLEX WITH ISCU; LYRM4 AND PYRIDOXAL 5' PHOSPHATE</scope>
    <scope>PYRIDOXAL 5' PHOSPHATE AT 258</scope>
    <scope>COFACTOR</scope>
    <scope>COMPONENT OF THE CYTEINE DESULFURASE COMPLEX</scope>
</reference>
<reference key="23">
    <citation type="journal article" date="2014" name="Mol. Genet. Genomic Med.">
        <title>Exome sequencing identifies NFS1 deficiency in a novel Fe-S cluster disease, infantile mitochondrial complex II/III deficiency.</title>
        <authorList>
            <person name="Farhan S.M."/>
            <person name="Wang J."/>
            <person name="Robinson J.F."/>
            <person name="Lahiry P."/>
            <person name="Siu V.M."/>
            <person name="Prasad C."/>
            <person name="Kronick J.B."/>
            <person name="Ramsay D.A."/>
            <person name="Rupar C.A."/>
            <person name="Hegele R.A."/>
        </authorList>
    </citation>
    <scope>VARIANT COXPD52 GLN-72</scope>
    <scope>INVOLVEMENT IN COXPD52</scope>
    <scope>CHARACTERIZATION OF VARIANT COXPD52 GLN-72</scope>
</reference>
<reference key="24">
    <citation type="journal article" date="2021" name="Mol. Genet. Metab. Rep.">
        <title>A recurring NFS1 pathogenic variant causes a mitochondrial disorder with variable intra-familial patient outcomes.</title>
        <authorList>
            <consortium name="Regeneron Genetics Center"/>
            <person name="Hershkovitz T."/>
            <person name="Kurolap A."/>
            <person name="Tal G."/>
            <person name="Paperna T."/>
            <person name="Mory A."/>
            <person name="Staples J."/>
            <person name="Brigatti K.W."/>
            <person name="Gonzaga-Jauregui C."/>
            <person name="Dumin E."/>
            <person name="Saada A."/>
            <person name="Mandel H."/>
            <person name="Baris Feldman H."/>
        </authorList>
    </citation>
    <scope>VARIANT COXPD52 GLN-72</scope>
    <scope>INVOLVEMENT IN COXPD52</scope>
</reference>
<sequence>MLLRAAWRRAAVAVTAAPGPKPAAPTRGLRLRVGDRAPQSAVPADTAAAPEVGPVLRPLYMDVQATTPLDPRVLDAMLPYLINYYGNPHSRTHAYGWESEAAMERARQQVASLIGADPREIIFTSGATESNNIAIKGVARFYRSRKKHLITTQTEHKCVLDSCRSLEAEGFQVTYLPVQKSGIIDLKELEAAIQPDTSLVSVMTVNNEIGVKQPIAEIGRICSSRKVYFHTDAAQAVGKIPLDVNDMKIDLMSISGHKIYGPKGVGAIYIRRRPRVRVEALQSGGGQERGMRSGTVPTPLVVGLGAACEVAQQEMEYDHKRISKLSERLIQNIMKSLPDVVMNGDPKHHYPGCINLSFAYVEGESLLMALKDVALSSGSACTSASLEPSYVLRAIGTDEDLAHSSIRFGIGRFTTEEEVDYTVEKCIQHVKRLREMSPLWEMVQDGIDLKSIKWTQH</sequence>
<gene>
    <name evidence="23 31" type="primary">NFS1</name>
    <name evidence="24" type="synonym">NIFS</name>
    <name type="ORF">HUSSY-08</name>
</gene>
<feature type="transit peptide" description="Mitochondrion" evidence="4">
    <location>
        <begin position="1"/>
        <end status="unknown"/>
    </location>
</feature>
<feature type="chain" id="PRO_0000001292" description="Cysteine desulfurase">
    <location>
        <begin status="unknown"/>
        <end position="457"/>
    </location>
</feature>
<feature type="active site" description="Cysteine persulfide intermediate" evidence="26 28">
    <location>
        <position position="381"/>
    </location>
</feature>
<feature type="binding site" evidence="13 18 33 34 36 37 38 39 40">
    <location>
        <position position="127"/>
    </location>
    <ligand>
        <name>pyridoxal 5'-phosphate</name>
        <dbReference type="ChEBI" id="CHEBI:597326"/>
    </ligand>
</feature>
<feature type="binding site" evidence="13 15 18 33 34 35 36 37 38 39 40">
    <location>
        <position position="128"/>
    </location>
    <ligand>
        <name>pyridoxal 5'-phosphate</name>
        <dbReference type="ChEBI" id="CHEBI:597326"/>
    </ligand>
</feature>
<feature type="binding site" evidence="13 15 18 33 34 35 36 37 38 39 40">
    <location>
        <position position="235"/>
    </location>
    <ligand>
        <name>pyridoxal 5'-phosphate</name>
        <dbReference type="ChEBI" id="CHEBI:597326"/>
    </ligand>
</feature>
<feature type="binding site" evidence="13 15 18 33 34 35 36 37 38 39 40">
    <location>
        <position position="255"/>
    </location>
    <ligand>
        <name>pyridoxal 5'-phosphate</name>
        <dbReference type="ChEBI" id="CHEBI:597326"/>
    </ligand>
</feature>
<feature type="binding site" evidence="13 15 18 33 34 35 36 37 38 39 40">
    <location>
        <position position="257"/>
    </location>
    <ligand>
        <name>pyridoxal 5'-phosphate</name>
        <dbReference type="ChEBI" id="CHEBI:597326"/>
    </ligand>
</feature>
<feature type="binding site" evidence="13 15 33 34 35">
    <location>
        <position position="295"/>
    </location>
    <ligand>
        <name>pyridoxal 5'-phosphate</name>
        <dbReference type="ChEBI" id="CHEBI:597326"/>
    </ligand>
</feature>
<feature type="binding site" description="via persulfide group" evidence="1">
    <location>
        <position position="381"/>
    </location>
    <ligand>
        <name>[2Fe-2S] cluster</name>
        <dbReference type="ChEBI" id="CHEBI:190135"/>
        <note>ligand shared with ISCU</note>
    </ligand>
</feature>
<feature type="binding site" evidence="13 34">
    <location>
        <position position="381"/>
    </location>
    <ligand>
        <name>Zn(2+)</name>
        <dbReference type="ChEBI" id="CHEBI:29105"/>
        <note>ligand shared with ISCU (isoform 2)</note>
    </ligand>
</feature>
<feature type="modified residue" description="N6-(pyridoxal phosphate)lysine" evidence="13 15 18 33 34 35 36 37 38 39 40">
    <location>
        <position position="258"/>
    </location>
</feature>
<feature type="modified residue" description="Cysteine persulfide" evidence="26 28">
    <location>
        <position position="381"/>
    </location>
</feature>
<feature type="splice variant" id="VSP_018646" description="In isoform Cytoplasmic." evidence="20 21 22 24">
    <location>
        <begin position="1"/>
        <end position="60"/>
    </location>
</feature>
<feature type="splice variant" id="VSP_045860" description="In isoform 3." evidence="21">
    <location>
        <begin position="136"/>
        <end position="186"/>
    </location>
</feature>
<feature type="sequence variant" id="VAR_085966" description="In COXPD52; decreased protein expression in homozygous patient cells; dbSNP:rs200592030." evidence="11 17">
    <original>R</original>
    <variation>Q</variation>
    <location>
        <position position="72"/>
    </location>
</feature>
<feature type="sequence conflict" description="In Ref. 1; AAD09187." evidence="25" ref="1">
    <original>A</original>
    <variation>V</variation>
    <location>
        <position position="5"/>
    </location>
</feature>
<feature type="sequence conflict" description="In Ref. 1; AAD09187." evidence="25" ref="1">
    <original>A</original>
    <variation>T</variation>
    <location>
        <position position="47"/>
    </location>
</feature>
<feature type="sequence conflict" description="In Ref. 3; BAG63421." evidence="25" ref="3">
    <original>T</original>
    <variation>A</variation>
    <location>
        <position position="197"/>
    </location>
</feature>
<feature type="sequence conflict" description="In Ref. 1; AAD09187." evidence="25" ref="1">
    <original>R</original>
    <variation>A</variation>
    <location>
        <position position="412"/>
    </location>
</feature>
<feature type="sequence conflict" description="In Ref. 1; AAD09187." evidence="25" ref="1">
    <original>K</original>
    <variation>N</variation>
    <location>
        <position position="431"/>
    </location>
</feature>
<feature type="turn" evidence="41">
    <location>
        <begin position="63"/>
        <end position="65"/>
    </location>
</feature>
<feature type="helix" evidence="41">
    <location>
        <begin position="71"/>
        <end position="82"/>
    </location>
</feature>
<feature type="helix" evidence="41">
    <location>
        <begin position="94"/>
        <end position="114"/>
    </location>
</feature>
<feature type="helix" evidence="41">
    <location>
        <begin position="118"/>
        <end position="120"/>
    </location>
</feature>
<feature type="strand" evidence="41">
    <location>
        <begin position="121"/>
        <end position="125"/>
    </location>
</feature>
<feature type="helix" evidence="41">
    <location>
        <begin position="127"/>
        <end position="141"/>
    </location>
</feature>
<feature type="turn" evidence="41">
    <location>
        <begin position="142"/>
        <end position="145"/>
    </location>
</feature>
<feature type="strand" evidence="41">
    <location>
        <begin position="148"/>
        <end position="152"/>
    </location>
</feature>
<feature type="helix" evidence="41">
    <location>
        <begin position="157"/>
        <end position="168"/>
    </location>
</feature>
<feature type="strand" evidence="41">
    <location>
        <begin position="172"/>
        <end position="176"/>
    </location>
</feature>
<feature type="helix" evidence="41">
    <location>
        <begin position="186"/>
        <end position="192"/>
    </location>
</feature>
<feature type="strand" evidence="41">
    <location>
        <begin position="197"/>
        <end position="201"/>
    </location>
</feature>
<feature type="turn" evidence="41">
    <location>
        <begin position="207"/>
        <end position="209"/>
    </location>
</feature>
<feature type="helix" evidence="41">
    <location>
        <begin position="215"/>
        <end position="224"/>
    </location>
</feature>
<feature type="strand" evidence="41">
    <location>
        <begin position="228"/>
        <end position="232"/>
    </location>
</feature>
<feature type="turn" evidence="41">
    <location>
        <begin position="234"/>
        <end position="239"/>
    </location>
</feature>
<feature type="turn" evidence="41">
    <location>
        <begin position="244"/>
        <end position="248"/>
    </location>
</feature>
<feature type="strand" evidence="41">
    <location>
        <begin position="250"/>
        <end position="255"/>
    </location>
</feature>
<feature type="helix" evidence="41">
    <location>
        <begin position="256"/>
        <end position="258"/>
    </location>
</feature>
<feature type="strand" evidence="41">
    <location>
        <begin position="266"/>
        <end position="270"/>
    </location>
</feature>
<feature type="turn" evidence="41">
    <location>
        <begin position="272"/>
        <end position="275"/>
    </location>
</feature>
<feature type="turn" evidence="41">
    <location>
        <begin position="287"/>
        <end position="291"/>
    </location>
</feature>
<feature type="helix" evidence="41">
    <location>
        <begin position="298"/>
        <end position="336"/>
    </location>
</feature>
<feature type="strand" evidence="41">
    <location>
        <begin position="337"/>
        <end position="344"/>
    </location>
</feature>
<feature type="helix" evidence="43">
    <location>
        <begin position="346"/>
        <end position="348"/>
    </location>
</feature>
<feature type="strand" evidence="41">
    <location>
        <begin position="353"/>
        <end position="358"/>
    </location>
</feature>
<feature type="helix" evidence="41">
    <location>
        <begin position="363"/>
        <end position="369"/>
    </location>
</feature>
<feature type="strand" evidence="41">
    <location>
        <begin position="376"/>
        <end position="378"/>
    </location>
</feature>
<feature type="helix" evidence="42">
    <location>
        <begin position="380"/>
        <end position="382"/>
    </location>
</feature>
<feature type="turn" evidence="42">
    <location>
        <begin position="384"/>
        <end position="386"/>
    </location>
</feature>
<feature type="helix" evidence="41">
    <location>
        <begin position="390"/>
        <end position="394"/>
    </location>
</feature>
<feature type="helix" evidence="41">
    <location>
        <begin position="399"/>
        <end position="402"/>
    </location>
</feature>
<feature type="strand" evidence="41">
    <location>
        <begin position="405"/>
        <end position="409"/>
    </location>
</feature>
<feature type="helix" evidence="41">
    <location>
        <begin position="416"/>
        <end position="435"/>
    </location>
</feature>
<feature type="helix" evidence="41">
    <location>
        <begin position="438"/>
        <end position="444"/>
    </location>
</feature>
<feature type="helix" evidence="41">
    <location>
        <begin position="449"/>
        <end position="451"/>
    </location>
</feature>
<accession>Q9Y697</accession>
<accession>B3KMA5</accession>
<accession>B4DXK9</accession>
<accession>E1P5R8</accession>
<accession>F5GYK5</accession>
<accession>Q6P0L8</accession>
<accession>Q9NTZ5</accession>
<accession>Q9Y481</accession>
<proteinExistence type="evidence at protein level"/>
<keyword id="KW-0002">3D-structure</keyword>
<keyword id="KW-0024">Alternative initiation</keyword>
<keyword id="KW-0025">Alternative splicing</keyword>
<keyword id="KW-0963">Cytoplasm</keyword>
<keyword id="KW-0206">Cytoskeleton</keyword>
<keyword id="KW-0225">Disease variant</keyword>
<keyword id="KW-0408">Iron</keyword>
<keyword id="KW-0411">Iron-sulfur</keyword>
<keyword id="KW-0479">Metal-binding</keyword>
<keyword id="KW-0496">Mitochondrion</keyword>
<keyword id="KW-0501">Molybdenum cofactor biosynthesis</keyword>
<keyword id="KW-0539">Nucleus</keyword>
<keyword id="KW-1274">Primary mitochondrial disease</keyword>
<keyword id="KW-1267">Proteomics identification</keyword>
<keyword id="KW-0663">Pyridoxal phosphate</keyword>
<keyword id="KW-1185">Reference proteome</keyword>
<keyword id="KW-0808">Transferase</keyword>
<keyword id="KW-0809">Transit peptide</keyword>